<reference key="1">
    <citation type="journal article" date="2005" name="Proc. Natl. Acad. Sci. U.S.A.">
        <title>Complete genome sequencing of Anaplasma marginale reveals that the surface is skewed to two superfamilies of outer membrane proteins.</title>
        <authorList>
            <person name="Brayton K.A."/>
            <person name="Kappmeyer L.S."/>
            <person name="Herndon D.R."/>
            <person name="Dark M.J."/>
            <person name="Tibbals D.L."/>
            <person name="Palmer G.H."/>
            <person name="McGuire T.C."/>
            <person name="Knowles D.P. Jr."/>
        </authorList>
    </citation>
    <scope>NUCLEOTIDE SEQUENCE [LARGE SCALE GENOMIC DNA]</scope>
    <source>
        <strain>St. Maries</strain>
    </source>
</reference>
<accession>Q5P9M7</accession>
<evidence type="ECO:0000255" key="1">
    <source>
        <dbReference type="HAMAP-Rule" id="MF_00023"/>
    </source>
</evidence>
<dbReference type="EMBL" id="CP000030">
    <property type="protein sequence ID" value="AAV87003.1"/>
    <property type="molecule type" value="Genomic_DNA"/>
</dbReference>
<dbReference type="RefSeq" id="WP_011114614.1">
    <property type="nucleotide sequence ID" value="NC_004842.2"/>
</dbReference>
<dbReference type="SMR" id="Q5P9M7"/>
<dbReference type="KEGG" id="ama:AM1171"/>
<dbReference type="HOGENOM" id="CLU_108953_0_0_5"/>
<dbReference type="GO" id="GO:0005829">
    <property type="term" value="C:cytosol"/>
    <property type="evidence" value="ECO:0007669"/>
    <property type="project" value="TreeGrafter"/>
</dbReference>
<dbReference type="GO" id="GO:0003723">
    <property type="term" value="F:RNA binding"/>
    <property type="evidence" value="ECO:0007669"/>
    <property type="project" value="UniProtKB-UniRule"/>
</dbReference>
<dbReference type="GO" id="GO:0070929">
    <property type="term" value="P:trans-translation"/>
    <property type="evidence" value="ECO:0007669"/>
    <property type="project" value="UniProtKB-UniRule"/>
</dbReference>
<dbReference type="CDD" id="cd09294">
    <property type="entry name" value="SmpB"/>
    <property type="match status" value="1"/>
</dbReference>
<dbReference type="Gene3D" id="2.40.280.10">
    <property type="match status" value="1"/>
</dbReference>
<dbReference type="HAMAP" id="MF_00023">
    <property type="entry name" value="SmpB"/>
    <property type="match status" value="1"/>
</dbReference>
<dbReference type="InterPro" id="IPR023620">
    <property type="entry name" value="SmpB"/>
</dbReference>
<dbReference type="InterPro" id="IPR000037">
    <property type="entry name" value="SsrA-bd_prot"/>
</dbReference>
<dbReference type="InterPro" id="IPR020081">
    <property type="entry name" value="SsrA-bd_prot_CS"/>
</dbReference>
<dbReference type="NCBIfam" id="NF003843">
    <property type="entry name" value="PRK05422.1"/>
    <property type="match status" value="1"/>
</dbReference>
<dbReference type="NCBIfam" id="TIGR00086">
    <property type="entry name" value="smpB"/>
    <property type="match status" value="1"/>
</dbReference>
<dbReference type="PANTHER" id="PTHR30308:SF2">
    <property type="entry name" value="SSRA-BINDING PROTEIN"/>
    <property type="match status" value="1"/>
</dbReference>
<dbReference type="PANTHER" id="PTHR30308">
    <property type="entry name" value="TMRNA-BINDING COMPONENT OF TRANS-TRANSLATION TAGGING COMPLEX"/>
    <property type="match status" value="1"/>
</dbReference>
<dbReference type="Pfam" id="PF01668">
    <property type="entry name" value="SmpB"/>
    <property type="match status" value="1"/>
</dbReference>
<dbReference type="SUPFAM" id="SSF74982">
    <property type="entry name" value="Small protein B (SmpB)"/>
    <property type="match status" value="1"/>
</dbReference>
<dbReference type="PROSITE" id="PS01317">
    <property type="entry name" value="SSRP"/>
    <property type="match status" value="1"/>
</dbReference>
<feature type="chain" id="PRO_0000102892" description="SsrA-binding protein">
    <location>
        <begin position="1"/>
        <end position="149"/>
    </location>
</feature>
<comment type="function">
    <text evidence="1">Required for rescue of stalled ribosomes mediated by trans-translation. Binds to transfer-messenger RNA (tmRNA), required for stable association of tmRNA with ribosomes. tmRNA and SmpB together mimic tRNA shape, replacing the anticodon stem-loop with SmpB. tmRNA is encoded by the ssrA gene; the 2 termini fold to resemble tRNA(Ala) and it encodes a 'tag peptide', a short internal open reading frame. During trans-translation Ala-aminoacylated tmRNA acts like a tRNA, entering the A-site of stalled ribosomes, displacing the stalled mRNA. The ribosome then switches to translate the ORF on the tmRNA; the nascent peptide is terminated with the 'tag peptide' encoded by the tmRNA and targeted for degradation. The ribosome is freed to recommence translation, which seems to be the essential function of trans-translation.</text>
</comment>
<comment type="subcellular location">
    <subcellularLocation>
        <location evidence="1">Cytoplasm</location>
    </subcellularLocation>
    <text evidence="1">The tmRNA-SmpB complex associates with stalled 70S ribosomes.</text>
</comment>
<comment type="similarity">
    <text evidence="1">Belongs to the SmpB family.</text>
</comment>
<gene>
    <name evidence="1" type="primary">smpB</name>
    <name type="ordered locus">AM1171</name>
</gene>
<protein>
    <recommendedName>
        <fullName evidence="1">SsrA-binding protein</fullName>
    </recommendedName>
    <alternativeName>
        <fullName evidence="1">Small protein B</fullName>
    </alternativeName>
</protein>
<organism>
    <name type="scientific">Anaplasma marginale (strain St. Maries)</name>
    <dbReference type="NCBI Taxonomy" id="234826"/>
    <lineage>
        <taxon>Bacteria</taxon>
        <taxon>Pseudomonadati</taxon>
        <taxon>Pseudomonadota</taxon>
        <taxon>Alphaproteobacteria</taxon>
        <taxon>Rickettsiales</taxon>
        <taxon>Anaplasmataceae</taxon>
        <taxon>Anaplasma</taxon>
    </lineage>
</organism>
<proteinExistence type="inferred from homology"/>
<name>SSRP_ANAMM</name>
<keyword id="KW-0963">Cytoplasm</keyword>
<keyword id="KW-0694">RNA-binding</keyword>
<sequence>MEIVAENRKARFDYFVLQEYDAGMVLVGSEVKSLRQRKVNMGDAYVLEKDMELWIHNLHISEYNRADRKNHKPLRVRKLLLRKREIHKIAGNIKVSGLAVVPLMIFFNNKGIAKIKIAIVKGKKLYDKREAIKTRDWQREKSRISRREV</sequence>